<sequence>MTENQTAHVRALILDATPLITQSYTHYQNYAQSFYTTPTVFQEIKDAQARKNLEIWQSLGTLKLVHPSENSIAKVSTFAKLTGDYSVLSANDLHILALTYELEIKLNNGDWRLRKKPGDALDASKADVGTDGKQKLTEDNKKEEDSESVPKKKNKRRGGKKQKAKREAREAREAENANLELESKAEEHVEEAGSKEQICNDENIKESSDLNEVFEDADDDGDWITPENLTEAIIKDSGEDTTGSLGVEASEEDRHVALNRPENQVALATGDFAVQNVALQMNLNLMNFMSGLKIKRIRNYMLRCHACFKIFPLPKDGKPKHFCASCGGQGTLLRCAVSVDSRTGNVTPHLKSNFQWNNRGNRYSVASPLSKNSQKRYGKKGHVHSKPQENVILREDQKEYEKVIKQEEWTRRHNEKILNNWIGGGSADNYISPFAITGLKQHNVRIGKGRYVNSSKRRS</sequence>
<name>NOB1_YEAST</name>
<dbReference type="EC" id="3.1.-.-"/>
<dbReference type="EMBL" id="Z70678">
    <property type="protein sequence ID" value="CAA94541.1"/>
    <property type="molecule type" value="Genomic_DNA"/>
</dbReference>
<dbReference type="EMBL" id="Z74964">
    <property type="protein sequence ID" value="CAA99249.1"/>
    <property type="molecule type" value="Genomic_DNA"/>
</dbReference>
<dbReference type="EMBL" id="BK006948">
    <property type="protein sequence ID" value="DAA10835.1"/>
    <property type="molecule type" value="Genomic_DNA"/>
</dbReference>
<dbReference type="PIR" id="S66939">
    <property type="entry name" value="S66939"/>
</dbReference>
<dbReference type="RefSeq" id="NP_014699.1">
    <property type="nucleotide sequence ID" value="NM_001183475.1"/>
</dbReference>
<dbReference type="PDB" id="8C01">
    <property type="method" value="EM"/>
    <property type="resolution" value="2.70 A"/>
    <property type="chains" value="o=1-459"/>
</dbReference>
<dbReference type="PDB" id="8CBJ">
    <property type="method" value="EM"/>
    <property type="resolution" value="3.80 A"/>
    <property type="chains" value="a=1-459"/>
</dbReference>
<dbReference type="PDBsum" id="8C01"/>
<dbReference type="PDBsum" id="8CBJ"/>
<dbReference type="EMDB" id="EMD-16349"/>
<dbReference type="SMR" id="Q08444"/>
<dbReference type="BioGRID" id="34454">
    <property type="interactions" value="261"/>
</dbReference>
<dbReference type="DIP" id="DIP-6440N"/>
<dbReference type="FunCoup" id="Q08444">
    <property type="interactions" value="1243"/>
</dbReference>
<dbReference type="IntAct" id="Q08444">
    <property type="interactions" value="38"/>
</dbReference>
<dbReference type="MINT" id="Q08444"/>
<dbReference type="STRING" id="4932.YOR056C"/>
<dbReference type="iPTMnet" id="Q08444"/>
<dbReference type="PaxDb" id="4932-YOR056C"/>
<dbReference type="PeptideAtlas" id="Q08444"/>
<dbReference type="EnsemblFungi" id="YOR056C_mRNA">
    <property type="protein sequence ID" value="YOR056C"/>
    <property type="gene ID" value="YOR056C"/>
</dbReference>
<dbReference type="GeneID" id="854221"/>
<dbReference type="KEGG" id="sce:YOR056C"/>
<dbReference type="AGR" id="SGD:S000005582"/>
<dbReference type="SGD" id="S000005582">
    <property type="gene designation" value="NOB1"/>
</dbReference>
<dbReference type="VEuPathDB" id="FungiDB:YOR056C"/>
<dbReference type="eggNOG" id="KOG2463">
    <property type="taxonomic scope" value="Eukaryota"/>
</dbReference>
<dbReference type="GeneTree" id="ENSGT00390000015857"/>
<dbReference type="HOGENOM" id="CLU_024666_2_1_1"/>
<dbReference type="InParanoid" id="Q08444"/>
<dbReference type="OMA" id="GYELECE"/>
<dbReference type="OrthoDB" id="446759at2759"/>
<dbReference type="BioCyc" id="YEAST:G3O-33596-MONOMER"/>
<dbReference type="BioGRID-ORCS" id="854221">
    <property type="hits" value="0 hits in 10 CRISPR screens"/>
</dbReference>
<dbReference type="PRO" id="PR:Q08444"/>
<dbReference type="Proteomes" id="UP000002311">
    <property type="component" value="Chromosome XV"/>
</dbReference>
<dbReference type="RNAct" id="Q08444">
    <property type="molecule type" value="protein"/>
</dbReference>
<dbReference type="GO" id="GO:0005737">
    <property type="term" value="C:cytoplasm"/>
    <property type="evidence" value="ECO:0000314"/>
    <property type="project" value="MGI"/>
</dbReference>
<dbReference type="GO" id="GO:0005783">
    <property type="term" value="C:endoplasmic reticulum"/>
    <property type="evidence" value="ECO:0007669"/>
    <property type="project" value="UniProtKB-SubCell"/>
</dbReference>
<dbReference type="GO" id="GO:0005730">
    <property type="term" value="C:nucleolus"/>
    <property type="evidence" value="ECO:0000314"/>
    <property type="project" value="MGI"/>
</dbReference>
<dbReference type="GO" id="GO:0005634">
    <property type="term" value="C:nucleus"/>
    <property type="evidence" value="ECO:0000314"/>
    <property type="project" value="MGI"/>
</dbReference>
<dbReference type="GO" id="GO:0030688">
    <property type="term" value="C:preribosome, small subunit precursor"/>
    <property type="evidence" value="ECO:0000314"/>
    <property type="project" value="SGD"/>
</dbReference>
<dbReference type="GO" id="GO:0046872">
    <property type="term" value="F:metal ion binding"/>
    <property type="evidence" value="ECO:0007669"/>
    <property type="project" value="UniProtKB-KW"/>
</dbReference>
<dbReference type="GO" id="GO:0004521">
    <property type="term" value="F:RNA endonuclease activity"/>
    <property type="evidence" value="ECO:0000314"/>
    <property type="project" value="SGD"/>
</dbReference>
<dbReference type="GO" id="GO:0070181">
    <property type="term" value="F:small ribosomal subunit rRNA binding"/>
    <property type="evidence" value="ECO:0000314"/>
    <property type="project" value="SGD"/>
</dbReference>
<dbReference type="GO" id="GO:0030490">
    <property type="term" value="P:maturation of SSU-rRNA"/>
    <property type="evidence" value="ECO:0000314"/>
    <property type="project" value="MGI"/>
</dbReference>
<dbReference type="GO" id="GO:0000462">
    <property type="term" value="P:maturation of SSU-rRNA from tricistronic rRNA transcript (SSU-rRNA, 5.8S rRNA, LSU-rRNA)"/>
    <property type="evidence" value="ECO:0000315"/>
    <property type="project" value="SGD"/>
</dbReference>
<dbReference type="GO" id="GO:0043248">
    <property type="term" value="P:proteasome assembly"/>
    <property type="evidence" value="ECO:0000315"/>
    <property type="project" value="SGD"/>
</dbReference>
<dbReference type="GO" id="GO:0042274">
    <property type="term" value="P:ribosomal small subunit biogenesis"/>
    <property type="evidence" value="ECO:0000314"/>
    <property type="project" value="MGI"/>
</dbReference>
<dbReference type="CDD" id="cd09876">
    <property type="entry name" value="PIN_Nob1-like"/>
    <property type="match status" value="1"/>
</dbReference>
<dbReference type="FunFam" id="3.40.50.1010:FF:000020">
    <property type="entry name" value="20S-pre-rRNA D-site endonuclease NOB1"/>
    <property type="match status" value="1"/>
</dbReference>
<dbReference type="Gene3D" id="3.40.50.1010">
    <property type="entry name" value="5'-nuclease"/>
    <property type="match status" value="1"/>
</dbReference>
<dbReference type="Gene3D" id="6.20.210.10">
    <property type="entry name" value="Nin one binding (NOB1), Zn-ribbon-like"/>
    <property type="match status" value="1"/>
</dbReference>
<dbReference type="InterPro" id="IPR039907">
    <property type="entry name" value="NOB1"/>
</dbReference>
<dbReference type="InterPro" id="IPR017117">
    <property type="entry name" value="Nob1_euk"/>
</dbReference>
<dbReference type="InterPro" id="IPR036283">
    <property type="entry name" value="NOB1_Zf-like_sf"/>
</dbReference>
<dbReference type="InterPro" id="IPR014881">
    <property type="entry name" value="NOB1_Zn-bd"/>
</dbReference>
<dbReference type="InterPro" id="IPR002716">
    <property type="entry name" value="PIN_dom"/>
</dbReference>
<dbReference type="InterPro" id="IPR033411">
    <property type="entry name" value="Ribonuclease_PIN"/>
</dbReference>
<dbReference type="PANTHER" id="PTHR12814">
    <property type="entry name" value="RNA-BINDING PROTEIN NOB1"/>
    <property type="match status" value="1"/>
</dbReference>
<dbReference type="PANTHER" id="PTHR12814:SF2">
    <property type="entry name" value="RNA-BINDING PROTEIN NOB1"/>
    <property type="match status" value="1"/>
</dbReference>
<dbReference type="Pfam" id="PF17146">
    <property type="entry name" value="PIN_6"/>
    <property type="match status" value="1"/>
</dbReference>
<dbReference type="Pfam" id="PF08772">
    <property type="entry name" value="Zn_ribbon_NOB1"/>
    <property type="match status" value="1"/>
</dbReference>
<dbReference type="PIRSF" id="PIRSF037125">
    <property type="entry name" value="D-site_20S_pre-rRNA_nuclease"/>
    <property type="match status" value="1"/>
</dbReference>
<dbReference type="SMART" id="SM00670">
    <property type="entry name" value="PINc"/>
    <property type="match status" value="1"/>
</dbReference>
<dbReference type="SUPFAM" id="SSF144206">
    <property type="entry name" value="NOB1 zinc finger-like"/>
    <property type="match status" value="1"/>
</dbReference>
<organism>
    <name type="scientific">Saccharomyces cerevisiae (strain ATCC 204508 / S288c)</name>
    <name type="common">Baker's yeast</name>
    <dbReference type="NCBI Taxonomy" id="559292"/>
    <lineage>
        <taxon>Eukaryota</taxon>
        <taxon>Fungi</taxon>
        <taxon>Dikarya</taxon>
        <taxon>Ascomycota</taxon>
        <taxon>Saccharomycotina</taxon>
        <taxon>Saccharomycetes</taxon>
        <taxon>Saccharomycetales</taxon>
        <taxon>Saccharomycetaceae</taxon>
        <taxon>Saccharomyces</taxon>
    </lineage>
</organism>
<comment type="function">
    <text evidence="4 7">Required for the synthesis of 40S ribosome subunits. Has a role in processing 20S pre-rRNA into the mature 18S rRNA, where it is required for cleavage at the 3' end of the mature 18S rRNA (D-site). Accompanies the 20S pre-rRNA from the nucleus to the cytoplasm. In association with NIN1, may promote the recruitment of the proteasome to the ribosomal subunits stalled in maturation.</text>
</comment>
<comment type="subunit">
    <text evidence="3 6">Component of the small ribosomal subunit, ribosomal RNA processing complex (SSU RRP complex). Interacts with PNO1.</text>
</comment>
<comment type="subcellular location">
    <subcellularLocation>
        <location>Cytoplasm</location>
    </subcellularLocation>
    <subcellularLocation>
        <location>Nucleus</location>
        <location>Nucleolus</location>
    </subcellularLocation>
    <subcellularLocation>
        <location>Endoplasmic reticulum</location>
    </subcellularLocation>
</comment>
<comment type="miscellaneous">
    <text evidence="5">Present with 4490 molecules/cell in log phase SD medium.</text>
</comment>
<comment type="similarity">
    <text evidence="8">Belongs to the NOB1 family.</text>
</comment>
<reference key="1">
    <citation type="journal article" date="1997" name="Yeast">
        <title>The sequence of a 54.7 kb fragment of yeast chromosome XV reveals the presence of two tRNAs and 24 new open reading frames.</title>
        <authorList>
            <person name="Valens M."/>
            <person name="Bohn C."/>
            <person name="Daignan-Fornier B."/>
            <person name="Dang V.-D."/>
            <person name="Bolotin-Fukuhara M."/>
        </authorList>
    </citation>
    <scope>NUCLEOTIDE SEQUENCE [GENOMIC DNA]</scope>
</reference>
<reference key="2">
    <citation type="journal article" date="1997" name="Nature">
        <title>The nucleotide sequence of Saccharomyces cerevisiae chromosome XV.</title>
        <authorList>
            <person name="Dujon B."/>
            <person name="Albermann K."/>
            <person name="Aldea M."/>
            <person name="Alexandraki D."/>
            <person name="Ansorge W."/>
            <person name="Arino J."/>
            <person name="Benes V."/>
            <person name="Bohn C."/>
            <person name="Bolotin-Fukuhara M."/>
            <person name="Bordonne R."/>
            <person name="Boyer J."/>
            <person name="Camasses A."/>
            <person name="Casamayor A."/>
            <person name="Casas C."/>
            <person name="Cheret G."/>
            <person name="Cziepluch C."/>
            <person name="Daignan-Fornier B."/>
            <person name="Dang V.-D."/>
            <person name="de Haan M."/>
            <person name="Delius H."/>
            <person name="Durand P."/>
            <person name="Fairhead C."/>
            <person name="Feldmann H."/>
            <person name="Gaillon L."/>
            <person name="Galisson F."/>
            <person name="Gamo F.-J."/>
            <person name="Gancedo C."/>
            <person name="Goffeau A."/>
            <person name="Goulding S.E."/>
            <person name="Grivell L.A."/>
            <person name="Habbig B."/>
            <person name="Hand N.J."/>
            <person name="Hani J."/>
            <person name="Hattenhorst U."/>
            <person name="Hebling U."/>
            <person name="Hernando Y."/>
            <person name="Herrero E."/>
            <person name="Heumann K."/>
            <person name="Hiesel R."/>
            <person name="Hilger F."/>
            <person name="Hofmann B."/>
            <person name="Hollenberg C.P."/>
            <person name="Hughes B."/>
            <person name="Jauniaux J.-C."/>
            <person name="Kalogeropoulos A."/>
            <person name="Katsoulou C."/>
            <person name="Kordes E."/>
            <person name="Lafuente M.J."/>
            <person name="Landt O."/>
            <person name="Louis E.J."/>
            <person name="Maarse A.C."/>
            <person name="Madania A."/>
            <person name="Mannhaupt G."/>
            <person name="Marck C."/>
            <person name="Martin R.P."/>
            <person name="Mewes H.-W."/>
            <person name="Michaux G."/>
            <person name="Paces V."/>
            <person name="Parle-McDermott A.G."/>
            <person name="Pearson B.M."/>
            <person name="Perrin A."/>
            <person name="Pettersson B."/>
            <person name="Poch O."/>
            <person name="Pohl T.M."/>
            <person name="Poirey R."/>
            <person name="Portetelle D."/>
            <person name="Pujol A."/>
            <person name="Purnelle B."/>
            <person name="Ramezani Rad M."/>
            <person name="Rechmann S."/>
            <person name="Schwager C."/>
            <person name="Schweizer M."/>
            <person name="Sor F."/>
            <person name="Sterky F."/>
            <person name="Tarassov I.A."/>
            <person name="Teodoru C."/>
            <person name="Tettelin H."/>
            <person name="Thierry A."/>
            <person name="Tobiasch E."/>
            <person name="Tzermia M."/>
            <person name="Uhlen M."/>
            <person name="Unseld M."/>
            <person name="Valens M."/>
            <person name="Vandenbol M."/>
            <person name="Vetter I."/>
            <person name="Vlcek C."/>
            <person name="Voet M."/>
            <person name="Volckaert G."/>
            <person name="Voss H."/>
            <person name="Wambutt R."/>
            <person name="Wedler H."/>
            <person name="Wiemann S."/>
            <person name="Winsor B."/>
            <person name="Wolfe K.H."/>
            <person name="Zollner A."/>
            <person name="Zumstein E."/>
            <person name="Kleine K."/>
        </authorList>
    </citation>
    <scope>NUCLEOTIDE SEQUENCE [LARGE SCALE GENOMIC DNA]</scope>
    <source>
        <strain>ATCC 204508 / S288c</strain>
    </source>
</reference>
<reference key="3">
    <citation type="journal article" date="2014" name="G3 (Bethesda)">
        <title>The reference genome sequence of Saccharomyces cerevisiae: Then and now.</title>
        <authorList>
            <person name="Engel S.R."/>
            <person name="Dietrich F.S."/>
            <person name="Fisk D.G."/>
            <person name="Binkley G."/>
            <person name="Balakrishnan R."/>
            <person name="Costanzo M.C."/>
            <person name="Dwight S.S."/>
            <person name="Hitz B.C."/>
            <person name="Karra K."/>
            <person name="Nash R.S."/>
            <person name="Weng S."/>
            <person name="Wong E.D."/>
            <person name="Lloyd P."/>
            <person name="Skrzypek M.S."/>
            <person name="Miyasato S.R."/>
            <person name="Simison M."/>
            <person name="Cherry J.M."/>
        </authorList>
    </citation>
    <scope>GENOME REANNOTATION</scope>
    <source>
        <strain>ATCC 204508 / S288c</strain>
    </source>
</reference>
<reference key="4">
    <citation type="journal article" date="2002" name="Genes Dev.">
        <title>Nob1p is required for biogenesis of the 26S proteasome and degraded upon its maturation in Saccharomyces cerevisiae.</title>
        <authorList>
            <person name="Tone Y."/>
            <person name="Toh-e A."/>
        </authorList>
    </citation>
    <scope>INTERACTION WITH PNO1</scope>
    <scope>SUBCELLULAR LOCATION</scope>
    <scope>MUTAGENESIS OF LEU-279; GLN-280 AND MET-281</scope>
</reference>
<reference key="5">
    <citation type="journal article" date="2003" name="EMBO J.">
        <title>The path from nucleolar 90S to cytoplasmic 40S pre-ribosomes.</title>
        <authorList>
            <person name="Schaefer T."/>
            <person name="Strauss D."/>
            <person name="Petfalski E."/>
            <person name="Tollervey D."/>
            <person name="Hurt E."/>
        </authorList>
    </citation>
    <scope>SUBCELLULAR LOCATION</scope>
</reference>
<reference key="6">
    <citation type="journal article" date="2003" name="Mol. Cell. Biol.">
        <title>Nob1p is required for cleavage of the 3' end of 18S rRNA.</title>
        <authorList>
            <person name="Fatica A."/>
            <person name="Oeffinger M."/>
            <person name="Dlakic M."/>
            <person name="Tollervey D."/>
        </authorList>
    </citation>
    <scope>FUNCTION</scope>
    <scope>SUBCELLULAR LOCATION</scope>
</reference>
<reference key="7">
    <citation type="journal article" date="2003" name="Nature">
        <title>Global analysis of protein localization in budding yeast.</title>
        <authorList>
            <person name="Huh W.-K."/>
            <person name="Falvo J.V."/>
            <person name="Gerke L.C."/>
            <person name="Carroll A.S."/>
            <person name="Howson R.W."/>
            <person name="Weissman J.S."/>
            <person name="O'Shea E.K."/>
        </authorList>
    </citation>
    <scope>SUBCELLULAR LOCATION [LARGE SCALE ANALYSIS]</scope>
</reference>
<reference key="8">
    <citation type="journal article" date="2003" name="Nature">
        <title>Global analysis of protein expression in yeast.</title>
        <authorList>
            <person name="Ghaemmaghami S."/>
            <person name="Huh W.-K."/>
            <person name="Bower K."/>
            <person name="Howson R.W."/>
            <person name="Belle A."/>
            <person name="Dephoure N."/>
            <person name="O'Shea E.K."/>
            <person name="Weissman J.S."/>
        </authorList>
    </citation>
    <scope>LEVEL OF PROTEIN EXPRESSION [LARGE SCALE ANALYSIS]</scope>
</reference>
<reference key="9">
    <citation type="journal article" date="2004" name="RNA">
        <title>Dim2p, a KH-domain protein required for small ribosomal subunit synthesis.</title>
        <authorList>
            <person name="Vanrobays E."/>
            <person name="Gelugne J.-P."/>
            <person name="Caizergues-Ferrer M."/>
            <person name="Lafontaine D.L.J."/>
        </authorList>
    </citation>
    <scope>SUBUNIT</scope>
</reference>
<reference key="10">
    <citation type="journal article" date="2004" name="RNA">
        <title>PIN domain of Nob1p is required for D-site cleavage in 20S pre-rRNA.</title>
        <authorList>
            <person name="Fatica A."/>
            <person name="Tollervey D."/>
            <person name="Dlakic M."/>
        </authorList>
    </citation>
    <scope>FUNCTION</scope>
    <scope>MUTAGENESIS OF ASP-92 AND ASP-110</scope>
</reference>
<reference key="11">
    <citation type="journal article" date="2012" name="Proc. Natl. Acad. Sci. U.S.A.">
        <title>N-terminal acetylome analyses and functional insights of the N-terminal acetyltransferase NatB.</title>
        <authorList>
            <person name="Van Damme P."/>
            <person name="Lasa M."/>
            <person name="Polevoda B."/>
            <person name="Gazquez C."/>
            <person name="Elosegui-Artola A."/>
            <person name="Kim D.S."/>
            <person name="De Juan-Pardo E."/>
            <person name="Demeyer K."/>
            <person name="Hole K."/>
            <person name="Larrea E."/>
            <person name="Timmerman E."/>
            <person name="Prieto J."/>
            <person name="Arnesen T."/>
            <person name="Sherman F."/>
            <person name="Gevaert K."/>
            <person name="Aldabe R."/>
        </authorList>
    </citation>
    <scope>IDENTIFICATION BY MASS SPECTROMETRY [LARGE SCALE ANALYSIS]</scope>
</reference>
<evidence type="ECO:0000250" key="1"/>
<evidence type="ECO:0000256" key="2">
    <source>
        <dbReference type="SAM" id="MobiDB-lite"/>
    </source>
</evidence>
<evidence type="ECO:0000269" key="3">
    <source>
    </source>
</evidence>
<evidence type="ECO:0000269" key="4">
    <source>
    </source>
</evidence>
<evidence type="ECO:0000269" key="5">
    <source>
    </source>
</evidence>
<evidence type="ECO:0000269" key="6">
    <source>
    </source>
</evidence>
<evidence type="ECO:0000269" key="7">
    <source>
    </source>
</evidence>
<evidence type="ECO:0000305" key="8"/>
<evidence type="ECO:0007829" key="9">
    <source>
        <dbReference type="PDB" id="8C01"/>
    </source>
</evidence>
<accession>Q08444</accession>
<accession>D6W2B9</accession>
<accession>O00021</accession>
<gene>
    <name type="primary">NOB1</name>
    <name type="ordered locus">YOR056C</name>
    <name type="ORF">YOR29-07</name>
</gene>
<keyword id="KW-0002">3D-structure</keyword>
<keyword id="KW-0963">Cytoplasm</keyword>
<keyword id="KW-0256">Endoplasmic reticulum</keyword>
<keyword id="KW-0378">Hydrolase</keyword>
<keyword id="KW-0479">Metal-binding</keyword>
<keyword id="KW-0540">Nuclease</keyword>
<keyword id="KW-0539">Nucleus</keyword>
<keyword id="KW-1185">Reference proteome</keyword>
<keyword id="KW-0690">Ribosome biogenesis</keyword>
<keyword id="KW-0862">Zinc</keyword>
<feature type="chain" id="PRO_0000270554" description="20S-pre-rRNA D-site endonuclease NOB1">
    <location>
        <begin position="1"/>
        <end position="459"/>
    </location>
</feature>
<feature type="domain" description="PINc">
    <location>
        <begin position="10"/>
        <end position="115"/>
    </location>
</feature>
<feature type="region of interest" description="Disordered" evidence="2">
    <location>
        <begin position="120"/>
        <end position="205"/>
    </location>
</feature>
<feature type="region of interest" description="Disordered" evidence="2">
    <location>
        <begin position="366"/>
        <end position="385"/>
    </location>
</feature>
<feature type="compositionally biased region" description="Basic and acidic residues" evidence="2">
    <location>
        <begin position="120"/>
        <end position="150"/>
    </location>
</feature>
<feature type="compositionally biased region" description="Basic residues" evidence="2">
    <location>
        <begin position="151"/>
        <end position="164"/>
    </location>
</feature>
<feature type="compositionally biased region" description="Basic and acidic residues" evidence="2">
    <location>
        <begin position="165"/>
        <end position="194"/>
    </location>
</feature>
<feature type="compositionally biased region" description="Basic residues" evidence="2">
    <location>
        <begin position="373"/>
        <end position="385"/>
    </location>
</feature>
<feature type="binding site" evidence="1">
    <location>
        <position position="304"/>
    </location>
    <ligand>
        <name>Zn(2+)</name>
        <dbReference type="ChEBI" id="CHEBI:29105"/>
    </ligand>
</feature>
<feature type="binding site" evidence="1">
    <location>
        <position position="307"/>
    </location>
    <ligand>
        <name>Zn(2+)</name>
        <dbReference type="ChEBI" id="CHEBI:29105"/>
    </ligand>
</feature>
<feature type="binding site" evidence="1">
    <location>
        <position position="323"/>
    </location>
    <ligand>
        <name>Zn(2+)</name>
        <dbReference type="ChEBI" id="CHEBI:29105"/>
    </ligand>
</feature>
<feature type="binding site" evidence="1">
    <location>
        <position position="326"/>
    </location>
    <ligand>
        <name>Zn(2+)</name>
        <dbReference type="ChEBI" id="CHEBI:29105"/>
    </ligand>
</feature>
<feature type="mutagenesis site" description="No 20S cleavage." evidence="7">
    <original>D</original>
    <variation>N</variation>
    <location>
        <position position="92"/>
    </location>
</feature>
<feature type="mutagenesis site" description="No change in activity or growth." evidence="7">
    <original>D</original>
    <variation>N</variation>
    <location>
        <position position="110"/>
    </location>
</feature>
<feature type="mutagenesis site" description="Temperature-sensitive." evidence="3">
    <original>L</original>
    <variation>R</variation>
    <location>
        <position position="279"/>
    </location>
</feature>
<feature type="mutagenesis site" description="Temperature-sensitive." evidence="3">
    <original>Q</original>
    <variation>G</variation>
    <location>
        <position position="280"/>
    </location>
</feature>
<feature type="mutagenesis site" description="Temperature-sensitive." evidence="3">
    <original>M</original>
    <variation>G</variation>
    <location>
        <position position="281"/>
    </location>
</feature>
<feature type="strand" evidence="9">
    <location>
        <begin position="9"/>
        <end position="14"/>
    </location>
</feature>
<feature type="helix" evidence="9">
    <location>
        <begin position="16"/>
        <end position="21"/>
    </location>
</feature>
<feature type="helix" evidence="9">
    <location>
        <begin position="24"/>
        <end position="27"/>
    </location>
</feature>
<feature type="turn" evidence="9">
    <location>
        <begin position="28"/>
        <end position="30"/>
    </location>
</feature>
<feature type="strand" evidence="9">
    <location>
        <begin position="34"/>
        <end position="36"/>
    </location>
</feature>
<feature type="helix" evidence="9">
    <location>
        <begin position="38"/>
        <end position="43"/>
    </location>
</feature>
<feature type="helix" evidence="9">
    <location>
        <begin position="47"/>
        <end position="58"/>
    </location>
</feature>
<feature type="strand" evidence="9">
    <location>
        <begin position="62"/>
        <end position="64"/>
    </location>
</feature>
<feature type="helix" evidence="9">
    <location>
        <begin position="69"/>
        <end position="82"/>
    </location>
</feature>
<feature type="helix" evidence="9">
    <location>
        <begin position="84"/>
        <end position="86"/>
    </location>
</feature>
<feature type="helix" evidence="9">
    <location>
        <begin position="90"/>
        <end position="106"/>
    </location>
</feature>
<feature type="strand" evidence="9">
    <location>
        <begin position="107"/>
        <end position="110"/>
    </location>
</feature>
<feature type="turn" evidence="9">
    <location>
        <begin position="226"/>
        <end position="228"/>
    </location>
</feature>
<feature type="helix" evidence="9">
    <location>
        <begin position="229"/>
        <end position="235"/>
    </location>
</feature>
<feature type="turn" evidence="9">
    <location>
        <begin position="236"/>
        <end position="238"/>
    </location>
</feature>
<feature type="strand" evidence="9">
    <location>
        <begin position="241"/>
        <end position="243"/>
    </location>
</feature>
<feature type="strand" evidence="9">
    <location>
        <begin position="266"/>
        <end position="268"/>
    </location>
</feature>
<feature type="helix" evidence="9">
    <location>
        <begin position="272"/>
        <end position="280"/>
    </location>
</feature>
<feature type="turn" evidence="9">
    <location>
        <begin position="288"/>
        <end position="290"/>
    </location>
</feature>
<feature type="strand" evidence="9">
    <location>
        <begin position="296"/>
        <end position="304"/>
    </location>
</feature>
<feature type="turn" evidence="9">
    <location>
        <begin position="305"/>
        <end position="307"/>
    </location>
</feature>
<feature type="turn" evidence="9">
    <location>
        <begin position="324"/>
        <end position="326"/>
    </location>
</feature>
<feature type="strand" evidence="9">
    <location>
        <begin position="332"/>
        <end position="340"/>
    </location>
</feature>
<feature type="turn" evidence="9">
    <location>
        <begin position="341"/>
        <end position="343"/>
    </location>
</feature>
<feature type="strand" evidence="9">
    <location>
        <begin position="346"/>
        <end position="349"/>
    </location>
</feature>
<feature type="helix" evidence="9">
    <location>
        <begin position="371"/>
        <end position="377"/>
    </location>
</feature>
<feature type="strand" evidence="9">
    <location>
        <begin position="379"/>
        <end position="382"/>
    </location>
</feature>
<feature type="strand" evidence="9">
    <location>
        <begin position="384"/>
        <end position="386"/>
    </location>
</feature>
<feature type="helix" evidence="9">
    <location>
        <begin position="398"/>
        <end position="418"/>
    </location>
</feature>
<feature type="turn" evidence="9">
    <location>
        <begin position="450"/>
        <end position="453"/>
    </location>
</feature>
<protein>
    <recommendedName>
        <fullName>20S-pre-rRNA D-site endonuclease NOB1</fullName>
        <ecNumber>3.1.-.-</ecNumber>
    </recommendedName>
    <alternativeName>
        <fullName>NIN1-binding protein</fullName>
    </alternativeName>
    <alternativeName>
        <fullName>Pre-rRNA-processing endonuclease NOB1</fullName>
    </alternativeName>
</protein>
<proteinExistence type="evidence at protein level"/>